<feature type="chain" id="PRO_0000070058" description="Prostaglandin E2 receptor EP3 subtype">
    <location>
        <begin position="1"/>
        <end position="390"/>
    </location>
</feature>
<feature type="topological domain" description="Extracellular" evidence="3">
    <location>
        <begin position="1"/>
        <end position="53"/>
    </location>
</feature>
<feature type="transmembrane region" description="Helical; Name=1" evidence="3">
    <location>
        <begin position="54"/>
        <end position="78"/>
    </location>
</feature>
<feature type="topological domain" description="Cytoplasmic" evidence="3">
    <location>
        <begin position="79"/>
        <end position="91"/>
    </location>
</feature>
<feature type="transmembrane region" description="Helical; Name=2" evidence="3">
    <location>
        <begin position="92"/>
        <end position="112"/>
    </location>
</feature>
<feature type="topological domain" description="Extracellular" evidence="3">
    <location>
        <begin position="113"/>
        <end position="131"/>
    </location>
</feature>
<feature type="transmembrane region" description="Helical; Name=3" evidence="3">
    <location>
        <begin position="132"/>
        <end position="153"/>
    </location>
</feature>
<feature type="topological domain" description="Cytoplasmic" evidence="3">
    <location>
        <begin position="154"/>
        <end position="175"/>
    </location>
</feature>
<feature type="transmembrane region" description="Helical; Name=4" evidence="3">
    <location>
        <begin position="176"/>
        <end position="197"/>
    </location>
</feature>
<feature type="topological domain" description="Extracellular" evidence="3">
    <location>
        <begin position="198"/>
        <end position="227"/>
    </location>
</feature>
<feature type="transmembrane region" description="Helical; Name=5" evidence="3">
    <location>
        <begin position="228"/>
        <end position="253"/>
    </location>
</feature>
<feature type="topological domain" description="Cytoplasmic" evidence="3">
    <location>
        <begin position="254"/>
        <end position="283"/>
    </location>
</feature>
<feature type="transmembrane region" description="Helical; Name=6" evidence="3">
    <location>
        <begin position="284"/>
        <end position="307"/>
    </location>
</feature>
<feature type="topological domain" description="Extracellular" evidence="3">
    <location>
        <begin position="308"/>
        <end position="327"/>
    </location>
</feature>
<feature type="transmembrane region" description="Helical; Name=7" evidence="3">
    <location>
        <begin position="328"/>
        <end position="349"/>
    </location>
</feature>
<feature type="topological domain" description="Cytoplasmic" evidence="3">
    <location>
        <begin position="350"/>
        <end position="390"/>
    </location>
</feature>
<feature type="glycosylation site" description="N-linked (GlcNAc...) asparagine" evidence="3">
    <location>
        <position position="18"/>
    </location>
</feature>
<feature type="glycosylation site" description="N-linked (GlcNAc...) asparagine" evidence="3">
    <location>
        <position position="36"/>
    </location>
</feature>
<feature type="splice variant" id="VSP_058943" description="In isoform 12.">
    <original>IRYHTNNYASSSTSLPCQCSSTLMWSDHLER</original>
    <variation>MRKRRLREQFWRPASSGSGCQQIRCLMESCSLTQTGVQWSDFRSLQPSPPPLTAIFASWVQVILLPQPPK</variation>
    <location>
        <begin position="360"/>
        <end position="390"/>
    </location>
</feature>
<feature type="splice variant" id="VSP_053774" description="In isoform EP3-III." evidence="18">
    <original>IRYHTNNYASSSTSLPCQCSSTLMWSDHLER</original>
    <variation>VANAVSSCSNDGQKGQPISLSNEIIQTEAEEFWGN</variation>
    <location>
        <begin position="360"/>
        <end position="390"/>
    </location>
</feature>
<feature type="splice variant" id="VSP_053775" description="In isoform EP3-IV." evidence="18">
    <original>IRYHTNNYASSSTSLPCQCSSTLMWSDHLER</original>
    <variation>VANAVSSCSNDGQKGQPISLSNEIIQTEAMRKRRLREQEEFWGN</variation>
    <location>
        <begin position="360"/>
        <end position="390"/>
    </location>
</feature>
<feature type="splice variant" id="VSP_053776" description="In isoform EP3-V." evidence="18">
    <original>IRYHTNNYASSSTSLPCQCSSTLMWSDHLER</original>
    <variation>VANAVSSCSNDGQKGQPISLSNEIIQTEAMRKRRLREQEMGPDGRCFCHAWRQVPRTWCSSHDREPCSVQLS</variation>
    <location>
        <begin position="360"/>
        <end position="390"/>
    </location>
</feature>
<feature type="splice variant" id="VSP_001936" description="In isoform EP3B." evidence="12 13 14 15 16 17 18">
    <original>IRYHTNNYASSSTSLPCQCSSTLMWSDHLER</original>
    <variation>EEFWGN</variation>
    <location>
        <begin position="360"/>
        <end position="390"/>
    </location>
</feature>
<feature type="splice variant" id="VSP_001935" description="In isoform EP3C." evidence="13 14 15 16 17 18">
    <original>IRYHTNNYASSSTSLPCQCSSTLMWSDHLER</original>
    <variation>VANAVSSCSNDGQKGQPISLSNEIIQTEA</variation>
    <location>
        <begin position="360"/>
        <end position="390"/>
    </location>
</feature>
<feature type="splice variant" id="VSP_001937" description="In isoform EP3D." evidence="11 13 14 15 16 18">
    <original>IRYHTNNYASSSTSLPCQCSSTLMWSDHLER</original>
    <variation>MRKRRLREQEEFWGN</variation>
    <location>
        <begin position="360"/>
        <end position="390"/>
    </location>
</feature>
<feature type="splice variant" id="VSP_001938" description="In isoform EP3E." evidence="14 18">
    <original>IRYHTNNYASSSTSLPCQCSSTLMWSDHLER</original>
    <variation>MRKRRLREQLICSLQNSQIQRATAHCGQVQTYRVLNREEMEVLVSSINVYTRISTVKTE</variation>
    <location>
        <begin position="360"/>
        <end position="390"/>
    </location>
</feature>
<feature type="splice variant" id="VSP_053777" description="In isoform EP3E2." evidence="18">
    <original>IRYHTNNYASSSTSLPCQCSSTLMWSDHLER</original>
    <variation>VANAVSSCSNDGQKGQPISLSNEIIQTEAMRKRRLREQLICSLRTLRYRGQLHIVGKYKPIVC</variation>
    <location>
        <begin position="360"/>
        <end position="390"/>
    </location>
</feature>
<feature type="splice variant" id="VSP_001939" description="In isoform EP3F." evidence="14">
    <original>IRYHTNNYASSSTSLPCQCSSTLMWSDHLER</original>
    <variation>MRKRRLREQAPLLPTPTVIDPSRFCAQPFRWFLDLSFPAMSSSHPQLPLTLASFKLLREPCSVQLS</variation>
    <location>
        <begin position="360"/>
        <end position="390"/>
    </location>
</feature>
<feature type="splice variant" id="VSP_013271" description="In isoform EP3G." evidence="19">
    <original>IRYHTNNYASSSTSLPCQCSSTLMWSDHLER</original>
    <variation>EMGPDGRCFCHAWRQVPRTWCSSHDREPCSVQLS</variation>
    <location>
        <begin position="360"/>
        <end position="390"/>
    </location>
</feature>
<feature type="sequence variant" id="VAR_014694" description="In dbSNP:rs5670.">
    <original>M</original>
    <variation>L</variation>
    <location>
        <position position="169"/>
    </location>
</feature>
<feature type="sequence variant" id="VAR_049436" description="In dbSNP:rs13306020.">
    <original>T</original>
    <variation>M</variation>
    <location>
        <position position="319"/>
    </location>
</feature>
<feature type="sequence variant" id="VAR_029218" description="In dbSNP:rs13306014.">
    <original>N</original>
    <variation>S</variation>
    <location>
        <position position="366"/>
    </location>
</feature>
<feature type="sequence variant" id="VAR_014695" description="In dbSNP:rs5694.">
    <original>P</original>
    <variation>L</variation>
    <location>
        <position position="375"/>
    </location>
</feature>
<feature type="sequence conflict" description="In Ref. 3, 4 and 7." evidence="20" ref="3 4 7">
    <original>ER</original>
    <variation>DG</variation>
    <location>
        <begin position="28"/>
        <end position="29"/>
    </location>
</feature>
<feature type="turn" evidence="21">
    <location>
        <begin position="47"/>
        <end position="49"/>
    </location>
</feature>
<feature type="helix" evidence="21">
    <location>
        <begin position="53"/>
        <end position="77"/>
    </location>
</feature>
<feature type="helix" evidence="21">
    <location>
        <begin position="86"/>
        <end position="115"/>
    </location>
</feature>
<feature type="helix" evidence="21">
    <location>
        <begin position="120"/>
        <end position="123"/>
    </location>
</feature>
<feature type="strand" evidence="21">
    <location>
        <begin position="125"/>
        <end position="127"/>
    </location>
</feature>
<feature type="helix" evidence="21">
    <location>
        <begin position="128"/>
        <end position="160"/>
    </location>
</feature>
<feature type="helix" evidence="21">
    <location>
        <begin position="162"/>
        <end position="167"/>
    </location>
</feature>
<feature type="helix" evidence="21">
    <location>
        <begin position="172"/>
        <end position="189"/>
    </location>
</feature>
<feature type="helix" evidence="21">
    <location>
        <begin position="191"/>
        <end position="194"/>
    </location>
</feature>
<feature type="strand" evidence="21">
    <location>
        <begin position="199"/>
        <end position="202"/>
    </location>
</feature>
<feature type="turn" evidence="21">
    <location>
        <begin position="203"/>
        <end position="206"/>
    </location>
</feature>
<feature type="strand" evidence="21">
    <location>
        <begin position="207"/>
        <end position="210"/>
    </location>
</feature>
<feature type="helix" evidence="21">
    <location>
        <begin position="225"/>
        <end position="258"/>
    </location>
</feature>
<feature type="helix" evidence="21">
    <location>
        <begin position="276"/>
        <end position="306"/>
    </location>
</feature>
<feature type="helix" evidence="21">
    <location>
        <begin position="324"/>
        <end position="346"/>
    </location>
</feature>
<feature type="helix" evidence="21">
    <location>
        <begin position="348"/>
        <end position="352"/>
    </location>
</feature>
<comment type="function">
    <text evidence="1 6 7 8 9 10">Receptor for prostaglandin E2 (PGE2) (PubMed:7883006, PubMed:7981210, PubMed:8117308, PubMed:8135729, PubMed:8307176). The activity of this receptor can couple to both the inhibition of adenylate cyclase mediated by G(i) proteins, and to an elevation of intracellular calcium (PubMed:7883006, PubMed:7981210, PubMed:8117308, PubMed:8135729). Required for normal development of fever in response to pyrinogens, including IL1B, prostaglandin E2 and bacterial lipopolysaccharide (LPS). Required for normal potentiation of platelet aggregation by prostaglandin E2, and thus plays a role in the regulation of blood coagulation. Required for increased HCO3(-) secretion in the duodenum in response to mucosal acidification, and thereby contributes to the protection of the mucosa against acid-induced ulceration. Not required for normal kidney function, normal urine volume and osmolality (By similarity).</text>
</comment>
<comment type="subunit">
    <text evidence="2">Interacts (via C-terminus) with MKLN1.</text>
</comment>
<comment type="interaction">
    <interactant intactId="EBI-10234038">
        <id>P43115-12</id>
    </interactant>
    <interactant intactId="EBI-10173507">
        <id>Q6UY14-3</id>
        <label>ADAMTSL4</label>
    </interactant>
    <organismsDiffer>false</organismsDiffer>
    <experiments>3</experiments>
</comment>
<comment type="interaction">
    <interactant intactId="EBI-10234038">
        <id>P43115-12</id>
    </interactant>
    <interactant intactId="EBI-9250559">
        <id>P32320</id>
        <label>CDA</label>
    </interactant>
    <organismsDiffer>false</organismsDiffer>
    <experiments>3</experiments>
</comment>
<comment type="interaction">
    <interactant intactId="EBI-10234038">
        <id>P43115-12</id>
    </interactant>
    <interactant intactId="EBI-743414">
        <id>O95967</id>
        <label>EFEMP2</label>
    </interactant>
    <organismsDiffer>false</organismsDiffer>
    <experiments>3</experiments>
</comment>
<comment type="interaction">
    <interactant intactId="EBI-10234038">
        <id>P43115-12</id>
    </interactant>
    <interactant intactId="EBI-6509505">
        <id>Q0VD86</id>
        <label>INCA1</label>
    </interactant>
    <organismsDiffer>false</organismsDiffer>
    <experiments>3</experiments>
</comment>
<comment type="interaction">
    <interactant intactId="EBI-10234038">
        <id>P43115-12</id>
    </interactant>
    <interactant intactId="EBI-948001">
        <id>Q15323</id>
        <label>KRT31</label>
    </interactant>
    <organismsDiffer>false</organismsDiffer>
    <experiments>3</experiments>
</comment>
<comment type="interaction">
    <interactant intactId="EBI-10234038">
        <id>P43115-12</id>
    </interactant>
    <interactant intactId="EBI-1047263">
        <id>O76015</id>
        <label>KRT38</label>
    </interactant>
    <organismsDiffer>false</organismsDiffer>
    <experiments>3</experiments>
</comment>
<comment type="interaction">
    <interactant intactId="EBI-10234038">
        <id>P43115-12</id>
    </interactant>
    <interactant intactId="EBI-10171697">
        <id>Q6A162</id>
        <label>KRT40</label>
    </interactant>
    <organismsDiffer>false</organismsDiffer>
    <experiments>3</experiments>
</comment>
<comment type="interaction">
    <interactant intactId="EBI-10234038">
        <id>P43115-12</id>
    </interactant>
    <interactant intactId="EBI-10172290">
        <id>P60409</id>
        <label>KRTAP10-7</label>
    </interactant>
    <organismsDiffer>false</organismsDiffer>
    <experiments>3</experiments>
</comment>
<comment type="interaction">
    <interactant intactId="EBI-10234038">
        <id>P43115-12</id>
    </interactant>
    <interactant intactId="EBI-10171774">
        <id>P60410</id>
        <label>KRTAP10-8</label>
    </interactant>
    <organismsDiffer>false</organismsDiffer>
    <experiments>3</experiments>
</comment>
<comment type="interaction">
    <interactant intactId="EBI-10234038">
        <id>P43115-12</id>
    </interactant>
    <interactant intactId="EBI-10172052">
        <id>P60411</id>
        <label>KRTAP10-9</label>
    </interactant>
    <organismsDiffer>false</organismsDiffer>
    <experiments>3</experiments>
</comment>
<comment type="interaction">
    <interactant intactId="EBI-10234038">
        <id>P43115-12</id>
    </interactant>
    <interactant intactId="EBI-748397">
        <id>P50222</id>
        <label>MEOX2</label>
    </interactant>
    <organismsDiffer>false</organismsDiffer>
    <experiments>3</experiments>
</comment>
<comment type="interaction">
    <interactant intactId="EBI-10234038">
        <id>P43115-12</id>
    </interactant>
    <interactant intactId="EBI-945833">
        <id>Q7Z3S9</id>
        <label>NOTCH2NLA</label>
    </interactant>
    <organismsDiffer>false</organismsDiffer>
    <experiments>3</experiments>
</comment>
<comment type="interaction">
    <interactant intactId="EBI-10234038">
        <id>P43115-12</id>
    </interactant>
    <interactant intactId="EBI-307352">
        <id>Q04864</id>
        <label>REL</label>
    </interactant>
    <organismsDiffer>false</organismsDiffer>
    <experiments>3</experiments>
</comment>
<comment type="interaction">
    <interactant intactId="EBI-10234038">
        <id>P43115-12</id>
    </interactant>
    <interactant intactId="EBI-3918154">
        <id>Q9UGC6</id>
        <label>RGS17</label>
    </interactant>
    <organismsDiffer>false</organismsDiffer>
    <experiments>3</experiments>
</comment>
<comment type="interaction">
    <interactant intactId="EBI-10234038">
        <id>P43115-12</id>
    </interactant>
    <interactant intactId="EBI-1052678">
        <id>O76081</id>
        <label>RGS20</label>
    </interactant>
    <organismsDiffer>false</organismsDiffer>
    <experiments>3</experiments>
</comment>
<comment type="interaction">
    <interactant intactId="EBI-10234038">
        <id>P43115-12</id>
    </interactant>
    <interactant intactId="EBI-10178530">
        <id>O76081-6</id>
        <label>RGS20</label>
    </interactant>
    <organismsDiffer>false</organismsDiffer>
    <experiments>3</experiments>
</comment>
<comment type="interaction">
    <interactant intactId="EBI-10234038">
        <id>P43115-12</id>
    </interactant>
    <interactant intactId="EBI-742487">
        <id>O43597</id>
        <label>SPRY2</label>
    </interactant>
    <organismsDiffer>false</organismsDiffer>
    <experiments>3</experiments>
</comment>
<comment type="interaction">
    <interactant intactId="EBI-10234038">
        <id>P43115-12</id>
    </interactant>
    <interactant intactId="EBI-533224">
        <id>P15884</id>
        <label>TCF4</label>
    </interactant>
    <organismsDiffer>false</organismsDiffer>
    <experiments>3</experiments>
</comment>
<comment type="interaction">
    <interactant intactId="EBI-10234038">
        <id>P43115-12</id>
    </interactant>
    <interactant intactId="EBI-5235829">
        <id>Q8IWZ5</id>
        <label>TRIM42</label>
    </interactant>
    <organismsDiffer>false</organismsDiffer>
    <experiments>3</experiments>
</comment>
<comment type="subcellular location">
    <subcellularLocation>
        <location evidence="6 7 8 10">Cell membrane</location>
        <topology evidence="20">Multi-pass membrane protein</topology>
    </subcellularLocation>
</comment>
<comment type="alternative products">
    <event type="alternative splicing"/>
    <isoform>
        <id>P43115-1</id>
        <name>EP3A</name>
        <name>EP3-I</name>
        <name>EP3a1</name>
        <name>EP3a2</name>
        <name>EP(3-Ic)</name>
        <sequence type="displayed"/>
    </isoform>
    <isoform>
        <id>P43115-2</id>
        <name>EP3C</name>
        <name>EP3-II</name>
        <sequence type="described" ref="VSP_001935"/>
    </isoform>
    <isoform>
        <id>P43115-3</id>
        <name>EP3B</name>
        <name>EP3-III</name>
        <sequence type="described" ref="VSP_001936"/>
    </isoform>
    <isoform>
        <id>P43115-4</id>
        <name>EP3D</name>
        <name>EP3-IV</name>
        <sequence type="described" ref="VSP_001937"/>
    </isoform>
    <isoform>
        <id>P43115-5</id>
        <name>EP3E</name>
        <sequence type="described" ref="VSP_001938"/>
    </isoform>
    <isoform>
        <id>P43115-6</id>
        <name>EP3F</name>
        <sequence type="described" ref="VSP_001939"/>
    </isoform>
    <isoform>
        <id>P43115-7</id>
        <name>EP3G</name>
        <sequence type="described" ref="VSP_013271"/>
    </isoform>
    <isoform>
        <id>P43115-8</id>
        <name>EP3-III</name>
        <sequence type="described" ref="VSP_053774"/>
    </isoform>
    <isoform>
        <id>P43115-9</id>
        <name>EP3-IV</name>
        <sequence type="described" ref="VSP_053775"/>
    </isoform>
    <isoform>
        <id>P43115-10</id>
        <name>EP3-V</name>
        <sequence type="described" ref="VSP_053776"/>
    </isoform>
    <isoform>
        <id>P43115-11</id>
        <name>EP3E2</name>
        <sequence type="described" ref="VSP_053777"/>
    </isoform>
    <isoform>
        <id>P43115-12</id>
        <name>12</name>
        <sequence type="described" ref="VSP_058943"/>
    </isoform>
    <text>Additional isoforms seem to exist.</text>
</comment>
<comment type="tissue specificity">
    <text evidence="5 8 9">Detected in kidney (PubMed:8117308, PubMed:8135729). Expressed in small intestine, heart, pancreas, gastric fundic mucosa, mammary artery and pulmonary vessels.</text>
</comment>
<comment type="miscellaneous">
    <molecule>Isoform EP3C</molecule>
    <text evidence="20">Known as EP3D in PubMed:8075855.</text>
</comment>
<comment type="miscellaneous">
    <molecule>Isoform EP3B</molecule>
    <text evidence="20">Known as EP3E in PubMed:8075855.</text>
</comment>
<comment type="miscellaneous">
    <molecule>Isoform EP3D</molecule>
    <text evidence="20">Known as EP3F in PubMed:8075855.</text>
</comment>
<comment type="similarity">
    <text evidence="4">Belongs to the G-protein coupled receptor 1 family.</text>
</comment>
<comment type="sequence caution" evidence="20">
    <conflict type="frameshift">
        <sequence resource="EMBL-CDS" id="CAA58742"/>
    </conflict>
</comment>
<dbReference type="EMBL" id="S69200">
    <property type="protein sequence ID" value="AAB29854.1"/>
    <property type="molecule type" value="mRNA"/>
</dbReference>
<dbReference type="EMBL" id="L27488">
    <property type="protein sequence ID" value="AAC13372.1"/>
    <property type="molecule type" value="mRNA"/>
</dbReference>
<dbReference type="EMBL" id="L27489">
    <property type="protein sequence ID" value="AAC13373.1"/>
    <property type="molecule type" value="mRNA"/>
</dbReference>
<dbReference type="EMBL" id="L27490">
    <property type="protein sequence ID" value="AAC13374.1"/>
    <property type="molecule type" value="mRNA"/>
</dbReference>
<dbReference type="EMBL" id="X83857">
    <property type="protein sequence ID" value="CAA58737.1"/>
    <property type="molecule type" value="mRNA"/>
</dbReference>
<dbReference type="EMBL" id="X83858">
    <property type="protein sequence ID" value="CAA58738.1"/>
    <property type="molecule type" value="mRNA"/>
</dbReference>
<dbReference type="EMBL" id="X83859">
    <property type="protein sequence ID" value="CAA58739.1"/>
    <property type="molecule type" value="mRNA"/>
</dbReference>
<dbReference type="EMBL" id="X83860">
    <property type="protein sequence ID" value="CAA58740.1"/>
    <property type="molecule type" value="mRNA"/>
</dbReference>
<dbReference type="EMBL" id="X83861">
    <property type="protein sequence ID" value="CAA58741.1"/>
    <property type="molecule type" value="mRNA"/>
</dbReference>
<dbReference type="EMBL" id="X83862">
    <property type="protein sequence ID" value="CAA58742.1"/>
    <property type="status" value="ALT_FRAME"/>
    <property type="molecule type" value="mRNA"/>
</dbReference>
<dbReference type="EMBL" id="X83863">
    <property type="protein sequence ID" value="CAA58743.1"/>
    <property type="molecule type" value="mRNA"/>
</dbReference>
<dbReference type="EMBL" id="L26976">
    <property type="protein sequence ID" value="AAA60076.1"/>
    <property type="molecule type" value="mRNA"/>
</dbReference>
<dbReference type="EMBL" id="S69326">
    <property type="protein sequence ID" value="AAB30208.1"/>
    <property type="molecule type" value="mRNA"/>
</dbReference>
<dbReference type="EMBL" id="L32660">
    <property type="protein sequence ID" value="AAA68191.1"/>
    <property type="molecule type" value="mRNA"/>
</dbReference>
<dbReference type="EMBL" id="L32661">
    <property type="protein sequence ID" value="AAA68192.1"/>
    <property type="molecule type" value="mRNA"/>
</dbReference>
<dbReference type="EMBL" id="L32662">
    <property type="protein sequence ID" value="AAA68193.1"/>
    <property type="molecule type" value="mRNA"/>
</dbReference>
<dbReference type="EMBL" id="D38297">
    <property type="protein sequence ID" value="BAA07416.1"/>
    <property type="molecule type" value="mRNA"/>
</dbReference>
<dbReference type="EMBL" id="D38298">
    <property type="protein sequence ID" value="BAA07417.1"/>
    <property type="molecule type" value="mRNA"/>
</dbReference>
<dbReference type="EMBL" id="D38299">
    <property type="protein sequence ID" value="BAA07418.1"/>
    <property type="molecule type" value="mRNA"/>
</dbReference>
<dbReference type="EMBL" id="D38300">
    <property type="protein sequence ID" value="BAA07419.1"/>
    <property type="molecule type" value="mRNA"/>
</dbReference>
<dbReference type="EMBL" id="D38301">
    <property type="protein sequence ID" value="BAA07420.1"/>
    <property type="molecule type" value="mRNA"/>
</dbReference>
<dbReference type="EMBL" id="U13214">
    <property type="protein sequence ID" value="AAA21130.1"/>
    <property type="molecule type" value="mRNA"/>
</dbReference>
<dbReference type="EMBL" id="U13215">
    <property type="protein sequence ID" value="AAA21131.1"/>
    <property type="molecule type" value="mRNA"/>
</dbReference>
<dbReference type="EMBL" id="U13216">
    <property type="protein sequence ID" value="AAA21132.1"/>
    <property type="molecule type" value="mRNA"/>
</dbReference>
<dbReference type="EMBL" id="U13217">
    <property type="protein sequence ID" value="AAA21133.1"/>
    <property type="molecule type" value="mRNA"/>
</dbReference>
<dbReference type="EMBL" id="U13218">
    <property type="protein sequence ID" value="AAA21134.1"/>
    <property type="molecule type" value="mRNA"/>
</dbReference>
<dbReference type="EMBL" id="D86096">
    <property type="protein sequence ID" value="BAA19951.1"/>
    <property type="molecule type" value="Genomic_DNA"/>
</dbReference>
<dbReference type="EMBL" id="D86096">
    <property type="protein sequence ID" value="BAA19952.1"/>
    <property type="molecule type" value="Genomic_DNA"/>
</dbReference>
<dbReference type="EMBL" id="D86096">
    <property type="protein sequence ID" value="BAA19953.1"/>
    <property type="molecule type" value="Genomic_DNA"/>
</dbReference>
<dbReference type="EMBL" id="D86096">
    <property type="protein sequence ID" value="BAA19954.1"/>
    <property type="molecule type" value="Genomic_DNA"/>
</dbReference>
<dbReference type="EMBL" id="D86096">
    <property type="protein sequence ID" value="BAA19956.1"/>
    <property type="molecule type" value="Genomic_DNA"/>
</dbReference>
<dbReference type="EMBL" id="D86096">
    <property type="protein sequence ID" value="BAA19957.1"/>
    <property type="molecule type" value="Genomic_DNA"/>
</dbReference>
<dbReference type="EMBL" id="D86098">
    <property type="protein sequence ID" value="BAA19959.1"/>
    <property type="molecule type" value="mRNA"/>
</dbReference>
<dbReference type="EMBL" id="AY429108">
    <property type="protein sequence ID" value="AAR07903.1"/>
    <property type="molecule type" value="mRNA"/>
</dbReference>
<dbReference type="EMBL" id="AK315825">
    <property type="protein sequence ID" value="BAF98716.1"/>
    <property type="molecule type" value="mRNA"/>
</dbReference>
<dbReference type="EMBL" id="AB451481">
    <property type="protein sequence ID" value="BAG70295.1"/>
    <property type="molecule type" value="mRNA"/>
</dbReference>
<dbReference type="EMBL" id="AL031429">
    <property type="status" value="NOT_ANNOTATED_CDS"/>
    <property type="molecule type" value="Genomic_DNA"/>
</dbReference>
<dbReference type="EMBL" id="AL158087">
    <property type="status" value="NOT_ANNOTATED_CDS"/>
    <property type="molecule type" value="Genomic_DNA"/>
</dbReference>
<dbReference type="EMBL" id="CH471059">
    <property type="protein sequence ID" value="EAX06439.1"/>
    <property type="molecule type" value="Genomic_DNA"/>
</dbReference>
<dbReference type="EMBL" id="CH471059">
    <property type="protein sequence ID" value="EAX06446.1"/>
    <property type="molecule type" value="Genomic_DNA"/>
</dbReference>
<dbReference type="EMBL" id="BC024229">
    <property type="protein sequence ID" value="AAH24229.1"/>
    <property type="molecule type" value="mRNA"/>
</dbReference>
<dbReference type="EMBL" id="BC118578">
    <property type="protein sequence ID" value="AAI18579.1"/>
    <property type="molecule type" value="mRNA"/>
</dbReference>
<dbReference type="CCDS" id="CCDS44160.1">
    <molecule id="P43115-3"/>
</dbReference>
<dbReference type="CCDS" id="CCDS652.1">
    <molecule id="P43115-4"/>
</dbReference>
<dbReference type="CCDS" id="CCDS655.1">
    <molecule id="P43115-5"/>
</dbReference>
<dbReference type="CCDS" id="CCDS656.1">
    <molecule id="P43115-1"/>
</dbReference>
<dbReference type="CCDS" id="CCDS657.1">
    <molecule id="P43115-1"/>
</dbReference>
<dbReference type="CCDS" id="CCDS658.1">
    <molecule id="P43115-2"/>
</dbReference>
<dbReference type="PIR" id="B55995">
    <property type="entry name" value="B55995"/>
</dbReference>
<dbReference type="PIR" id="I38747">
    <property type="entry name" value="I38747"/>
</dbReference>
<dbReference type="PIR" id="I38748">
    <property type="entry name" value="I38748"/>
</dbReference>
<dbReference type="PIR" id="I38750">
    <property type="entry name" value="I38750"/>
</dbReference>
<dbReference type="PIR" id="JC2056">
    <property type="entry name" value="JC2056"/>
</dbReference>
<dbReference type="PIR" id="S43375">
    <property type="entry name" value="S43375"/>
</dbReference>
<dbReference type="PIR" id="S68994">
    <property type="entry name" value="S51313"/>
</dbReference>
<dbReference type="PIR" id="S68995">
    <property type="entry name" value="S51315"/>
</dbReference>
<dbReference type="PIR" id="S68996">
    <property type="entry name" value="S51316"/>
</dbReference>
<dbReference type="PIR" id="S68997">
    <property type="entry name" value="S51317"/>
</dbReference>
<dbReference type="PIR" id="S68998">
    <property type="entry name" value="S51318"/>
</dbReference>
<dbReference type="PIR" id="S68999">
    <property type="entry name" value="S51319"/>
</dbReference>
<dbReference type="RefSeq" id="NP_001119516.1">
    <molecule id="P43115-1"/>
    <property type="nucleotide sequence ID" value="NM_001126044.2"/>
</dbReference>
<dbReference type="RefSeq" id="NP_942007.1">
    <molecule id="P43115-1"/>
    <property type="nucleotide sequence ID" value="NM_198714.2"/>
</dbReference>
<dbReference type="RefSeq" id="NP_942008.1">
    <molecule id="P43115-2"/>
    <property type="nucleotide sequence ID" value="NM_198715.3"/>
</dbReference>
<dbReference type="RefSeq" id="NP_942009.1">
    <molecule id="P43115-4"/>
    <property type="nucleotide sequence ID" value="NM_198716.2"/>
</dbReference>
<dbReference type="RefSeq" id="NP_942010.1">
    <molecule id="P43115-3"/>
    <property type="nucleotide sequence ID" value="NM_198717.2"/>
</dbReference>
<dbReference type="RefSeq" id="NP_942011.1">
    <molecule id="P43115-5"/>
    <property type="nucleotide sequence ID" value="NM_198718.2"/>
</dbReference>
<dbReference type="RefSeq" id="NP_942012.1">
    <molecule id="P43115-1"/>
    <property type="nucleotide sequence ID" value="NM_198719.2"/>
</dbReference>
<dbReference type="PDB" id="6AK3">
    <property type="method" value="X-ray"/>
    <property type="resolution" value="2.90 A"/>
    <property type="chains" value="A/B=43-359"/>
</dbReference>
<dbReference type="PDB" id="6M9T">
    <property type="method" value="X-ray"/>
    <property type="resolution" value="2.50 A"/>
    <property type="chains" value="A=2-259, A=273-353"/>
</dbReference>
<dbReference type="PDB" id="7WU9">
    <property type="method" value="EM"/>
    <property type="resolution" value="3.38 A"/>
    <property type="chains" value="R=47-359"/>
</dbReference>
<dbReference type="PDB" id="8GDC">
    <property type="method" value="EM"/>
    <property type="resolution" value="3.50 A"/>
    <property type="chains" value="R=1-390"/>
</dbReference>
<dbReference type="PDBsum" id="6AK3"/>
<dbReference type="PDBsum" id="6M9T"/>
<dbReference type="PDBsum" id="7WU9"/>
<dbReference type="PDBsum" id="8GDC"/>
<dbReference type="EMDB" id="EMD-29946"/>
<dbReference type="EMDB" id="EMD-32824"/>
<dbReference type="SMR" id="P43115"/>
<dbReference type="BioGRID" id="111705">
    <property type="interactions" value="121"/>
</dbReference>
<dbReference type="FunCoup" id="P43115">
    <property type="interactions" value="1534"/>
</dbReference>
<dbReference type="IntAct" id="P43115">
    <property type="interactions" value="83"/>
</dbReference>
<dbReference type="STRING" id="9606.ENSP00000349003"/>
<dbReference type="BindingDB" id="P43115"/>
<dbReference type="ChEMBL" id="CHEMBL3710"/>
<dbReference type="DrugBank" id="DB00770">
    <property type="generic name" value="Alprostadil"/>
</dbReference>
<dbReference type="DrugBank" id="DB00905">
    <property type="generic name" value="Bimatoprost"/>
</dbReference>
<dbReference type="DrugBank" id="DB11113">
    <property type="generic name" value="Castor oil"/>
</dbReference>
<dbReference type="DrugBank" id="DB11507">
    <property type="generic name" value="Cloprostenol"/>
</dbReference>
<dbReference type="DrugBank" id="DB12789">
    <property type="generic name" value="Dinoprost"/>
</dbReference>
<dbReference type="DrugBank" id="DB00917">
    <property type="generic name" value="Dinoprostone"/>
</dbReference>
<dbReference type="DrugBank" id="DB11519">
    <property type="generic name" value="Fluprostenol"/>
</dbReference>
<dbReference type="DrugBank" id="DB08964">
    <property type="generic name" value="Gemeprost"/>
</dbReference>
<dbReference type="DrugBank" id="DB09211">
    <property type="generic name" value="Limaprost"/>
</dbReference>
<dbReference type="DrugBank" id="DB00929">
    <property type="generic name" value="Misoprostol"/>
</dbReference>
<dbReference type="DrugBank" id="DB02056">
    <property type="generic name" value="Prostaglandin D2"/>
</dbReference>
<dbReference type="DrugBank" id="DB16315">
    <property type="generic name" value="Rivenprost"/>
</dbReference>
<dbReference type="DrugBank" id="DB04297">
    <property type="generic name" value="Trichostatin A"/>
</dbReference>
<dbReference type="DrugCentral" id="P43115"/>
<dbReference type="GuidetoPHARMACOLOGY" id="342"/>
<dbReference type="TCDB" id="9.A.14.9.2">
    <property type="family name" value="the g-protein-coupled receptor (gpcr) family"/>
</dbReference>
<dbReference type="GlyCosmos" id="P43115">
    <property type="glycosylation" value="2 sites, No reported glycans"/>
</dbReference>
<dbReference type="GlyGen" id="P43115">
    <property type="glycosylation" value="2 sites"/>
</dbReference>
<dbReference type="iPTMnet" id="P43115"/>
<dbReference type="PhosphoSitePlus" id="P43115"/>
<dbReference type="BioMuta" id="PTGER3"/>
<dbReference type="DMDM" id="1172071"/>
<dbReference type="jPOST" id="P43115"/>
<dbReference type="MassIVE" id="P43115"/>
<dbReference type="PaxDb" id="9606-ENSP00000349003"/>
<dbReference type="PeptideAtlas" id="P43115"/>
<dbReference type="ProteomicsDB" id="3010"/>
<dbReference type="ProteomicsDB" id="55580">
    <molecule id="P43115-1"/>
</dbReference>
<dbReference type="ProteomicsDB" id="55581">
    <molecule id="P43115-2"/>
</dbReference>
<dbReference type="ProteomicsDB" id="55582">
    <molecule id="P43115-3"/>
</dbReference>
<dbReference type="ProteomicsDB" id="55583">
    <molecule id="P43115-4"/>
</dbReference>
<dbReference type="ProteomicsDB" id="55584">
    <molecule id="P43115-5"/>
</dbReference>
<dbReference type="ProteomicsDB" id="55585">
    <molecule id="P43115-6"/>
</dbReference>
<dbReference type="ProteomicsDB" id="55586">
    <molecule id="P43115-7"/>
</dbReference>
<dbReference type="ProteomicsDB" id="60186"/>
<dbReference type="Antibodypedia" id="2758">
    <property type="antibodies" value="473 antibodies from 38 providers"/>
</dbReference>
<dbReference type="DNASU" id="5733"/>
<dbReference type="Ensembl" id="ENST00000306666.10">
    <molecule id="P43115-1"/>
    <property type="protein sequence ID" value="ENSP00000302313.5"/>
    <property type="gene ID" value="ENSG00000050628.21"/>
</dbReference>
<dbReference type="Ensembl" id="ENST00000356595.8">
    <molecule id="P43115-5"/>
    <property type="protein sequence ID" value="ENSP00000349003.4"/>
    <property type="gene ID" value="ENSG00000050628.21"/>
</dbReference>
<dbReference type="Ensembl" id="ENST00000370924.5">
    <molecule id="P43115-2"/>
    <property type="protein sequence ID" value="ENSP00000359962.3"/>
    <property type="gene ID" value="ENSG00000050628.21"/>
</dbReference>
<dbReference type="Ensembl" id="ENST00000370931.7">
    <molecule id="P43115-1"/>
    <property type="protein sequence ID" value="ENSP00000359969.3"/>
    <property type="gene ID" value="ENSG00000050628.21"/>
</dbReference>
<dbReference type="Ensembl" id="ENST00000460330.5">
    <molecule id="P43115-4"/>
    <property type="protein sequence ID" value="ENSP00000418073.1"/>
    <property type="gene ID" value="ENSG00000050628.21"/>
</dbReference>
<dbReference type="Ensembl" id="ENST00000479353.5">
    <molecule id="P43115-7"/>
    <property type="protein sequence ID" value="ENSP00000421583.1"/>
    <property type="gene ID" value="ENSG00000050628.21"/>
</dbReference>
<dbReference type="Ensembl" id="ENST00000628037.2">
    <molecule id="P43115-3"/>
    <property type="protein sequence ID" value="ENSP00000486617.1"/>
    <property type="gene ID" value="ENSG00000050628.21"/>
</dbReference>
<dbReference type="GeneID" id="5733"/>
<dbReference type="KEGG" id="hsa:5733"/>
<dbReference type="MANE-Select" id="ENST00000306666.10">
    <property type="protein sequence ID" value="ENSP00000302313.5"/>
    <property type="RefSeq nucleotide sequence ID" value="NM_198719.2"/>
    <property type="RefSeq protein sequence ID" value="NP_942012.1"/>
</dbReference>
<dbReference type="UCSC" id="uc001dfg.2">
    <molecule id="P43115-1"/>
    <property type="organism name" value="human"/>
</dbReference>
<dbReference type="AGR" id="HGNC:9595"/>
<dbReference type="CTD" id="5733"/>
<dbReference type="DisGeNET" id="5733"/>
<dbReference type="GeneCards" id="PTGER3"/>
<dbReference type="HGNC" id="HGNC:9595">
    <property type="gene designation" value="PTGER3"/>
</dbReference>
<dbReference type="HPA" id="ENSG00000050628">
    <property type="expression patterns" value="Tissue enhanced (adipose tissue, endometrium, kidney, smooth muscle)"/>
</dbReference>
<dbReference type="MIM" id="176806">
    <property type="type" value="gene"/>
</dbReference>
<dbReference type="neXtProt" id="NX_P43115"/>
<dbReference type="OpenTargets" id="ENSG00000050628"/>
<dbReference type="PharmGKB" id="PA288"/>
<dbReference type="VEuPathDB" id="HostDB:ENSG00000050628"/>
<dbReference type="eggNOG" id="KOG3656">
    <property type="taxonomic scope" value="Eukaryota"/>
</dbReference>
<dbReference type="GeneTree" id="ENSGT01030000234559"/>
<dbReference type="InParanoid" id="P43115"/>
<dbReference type="OMA" id="HMKTRVT"/>
<dbReference type="OrthoDB" id="5959154at2759"/>
<dbReference type="PAN-GO" id="P43115">
    <property type="GO annotations" value="8 GO annotations based on evolutionary models"/>
</dbReference>
<dbReference type="PhylomeDB" id="P43115"/>
<dbReference type="TreeFam" id="TF324982"/>
<dbReference type="PathwayCommons" id="P43115"/>
<dbReference type="Reactome" id="R-HSA-391908">
    <property type="pathway name" value="Prostanoid ligand receptors"/>
</dbReference>
<dbReference type="Reactome" id="R-HSA-418594">
    <property type="pathway name" value="G alpha (i) signalling events"/>
</dbReference>
<dbReference type="SignaLink" id="P43115"/>
<dbReference type="SIGNOR" id="P43115"/>
<dbReference type="BioGRID-ORCS" id="5733">
    <property type="hits" value="23 hits in 1174 CRISPR screens"/>
</dbReference>
<dbReference type="ChiTaRS" id="PTGER3">
    <property type="organism name" value="human"/>
</dbReference>
<dbReference type="GenomeRNAi" id="5733"/>
<dbReference type="Pharos" id="P43115">
    <property type="development level" value="Tclin"/>
</dbReference>
<dbReference type="PRO" id="PR:P43115"/>
<dbReference type="Proteomes" id="UP000005640">
    <property type="component" value="Chromosome 1"/>
</dbReference>
<dbReference type="RNAct" id="P43115">
    <property type="molecule type" value="protein"/>
</dbReference>
<dbReference type="Bgee" id="ENSG00000050628">
    <property type="expression patterns" value="Expressed in nephron tubule and 204 other cell types or tissues"/>
</dbReference>
<dbReference type="ExpressionAtlas" id="P43115">
    <property type="expression patterns" value="baseline and differential"/>
</dbReference>
<dbReference type="GO" id="GO:0016020">
    <property type="term" value="C:membrane"/>
    <property type="evidence" value="ECO:0000303"/>
    <property type="project" value="UniProtKB"/>
</dbReference>
<dbReference type="GO" id="GO:0005635">
    <property type="term" value="C:nuclear envelope"/>
    <property type="evidence" value="ECO:0000304"/>
    <property type="project" value="ProtInc"/>
</dbReference>
<dbReference type="GO" id="GO:0005886">
    <property type="term" value="C:plasma membrane"/>
    <property type="evidence" value="ECO:0000314"/>
    <property type="project" value="UniProtKB"/>
</dbReference>
<dbReference type="GO" id="GO:0004957">
    <property type="term" value="F:prostaglandin E receptor activity"/>
    <property type="evidence" value="ECO:0000318"/>
    <property type="project" value="GO_Central"/>
</dbReference>
<dbReference type="GO" id="GO:0007189">
    <property type="term" value="P:adenylate cyclase-activating G protein-coupled receptor signaling pathway"/>
    <property type="evidence" value="ECO:0000318"/>
    <property type="project" value="GO_Central"/>
</dbReference>
<dbReference type="GO" id="GO:0008219">
    <property type="term" value="P:cell death"/>
    <property type="evidence" value="ECO:0000304"/>
    <property type="project" value="ProtInc"/>
</dbReference>
<dbReference type="GO" id="GO:0007186">
    <property type="term" value="P:G protein-coupled receptor signaling pathway"/>
    <property type="evidence" value="ECO:0000304"/>
    <property type="project" value="ProtInc"/>
</dbReference>
<dbReference type="GO" id="GO:0006954">
    <property type="term" value="P:inflammatory response"/>
    <property type="evidence" value="ECO:0000318"/>
    <property type="project" value="GO_Central"/>
</dbReference>
<dbReference type="GO" id="GO:0014827">
    <property type="term" value="P:intestine smooth muscle contraction"/>
    <property type="evidence" value="ECO:0000318"/>
    <property type="project" value="GO_Central"/>
</dbReference>
<dbReference type="GO" id="GO:0060455">
    <property type="term" value="P:negative regulation of gastric acid secretion"/>
    <property type="evidence" value="ECO:0000318"/>
    <property type="project" value="GO_Central"/>
</dbReference>
<dbReference type="GO" id="GO:0007200">
    <property type="term" value="P:phospholipase C-activating G protein-coupled receptor signaling pathway"/>
    <property type="evidence" value="ECO:0000318"/>
    <property type="project" value="GO_Central"/>
</dbReference>
<dbReference type="GO" id="GO:0007204">
    <property type="term" value="P:positive regulation of cytosolic calcium ion concentration"/>
    <property type="evidence" value="ECO:0000318"/>
    <property type="project" value="GO_Central"/>
</dbReference>
<dbReference type="GO" id="GO:0031622">
    <property type="term" value="P:positive regulation of fever generation"/>
    <property type="evidence" value="ECO:0000250"/>
    <property type="project" value="BHF-UCL"/>
</dbReference>
<dbReference type="FunFam" id="1.20.1070.10:FF:000087">
    <property type="entry name" value="prostaglandin E2 receptor EP3 subtype"/>
    <property type="match status" value="1"/>
</dbReference>
<dbReference type="Gene3D" id="1.20.1070.10">
    <property type="entry name" value="Rhodopsin 7-helix transmembrane proteins"/>
    <property type="match status" value="1"/>
</dbReference>
<dbReference type="InterPro" id="IPR001481">
    <property type="entry name" value="EP3_rcpt_2"/>
</dbReference>
<dbReference type="InterPro" id="IPR000276">
    <property type="entry name" value="GPCR_Rhodpsn"/>
</dbReference>
<dbReference type="InterPro" id="IPR017452">
    <property type="entry name" value="GPCR_Rhodpsn_7TM"/>
</dbReference>
<dbReference type="InterPro" id="IPR008365">
    <property type="entry name" value="Prostanoid_rcpt"/>
</dbReference>
<dbReference type="InterPro" id="IPR001244">
    <property type="entry name" value="Prostglndn_DP_rcpt"/>
</dbReference>
<dbReference type="InterPro" id="IPR000265">
    <property type="entry name" value="Prostglndn_EP3_rcpt"/>
</dbReference>
<dbReference type="PANTHER" id="PTHR11866">
    <property type="entry name" value="G-PROTEIN COUPLED RECEPTOR FAMILY 1 MEMBER"/>
    <property type="match status" value="1"/>
</dbReference>
<dbReference type="PANTHER" id="PTHR11866:SF10">
    <property type="entry name" value="PROSTAGLANDIN E2 RECEPTOR EP3 SUBTYPE"/>
    <property type="match status" value="1"/>
</dbReference>
<dbReference type="Pfam" id="PF00001">
    <property type="entry name" value="7tm_1"/>
    <property type="match status" value="1"/>
</dbReference>
<dbReference type="PRINTS" id="PR00237">
    <property type="entry name" value="GPCRRHODOPSN"/>
</dbReference>
<dbReference type="PRINTS" id="PR00428">
    <property type="entry name" value="PROSTAGLNDNR"/>
</dbReference>
<dbReference type="PRINTS" id="PR01788">
    <property type="entry name" value="PROSTANOIDR"/>
</dbReference>
<dbReference type="PRINTS" id="PR00584">
    <property type="entry name" value="PRSTNOIDE32R"/>
</dbReference>
<dbReference type="PRINTS" id="PR00582">
    <property type="entry name" value="PRSTNOIDEP3R"/>
</dbReference>
<dbReference type="SUPFAM" id="SSF81321">
    <property type="entry name" value="Family A G protein-coupled receptor-like"/>
    <property type="match status" value="1"/>
</dbReference>
<dbReference type="PROSITE" id="PS50262">
    <property type="entry name" value="G_PROTEIN_RECEP_F1_2"/>
    <property type="match status" value="1"/>
</dbReference>
<accession>P43115</accession>
<accession>B0AZN4</accession>
<accession>B1AK19</accession>
<accession>B5BUP5</accession>
<accession>O00326</accession>
<accession>Q12943</accession>
<accession>Q12944</accession>
<accession>Q12945</accession>
<accession>Q147X8</accession>
<accession>Q16546</accession>
<accession>Q5CZ59</accession>
<accession>Q5CZ61</accession>
<accession>Q5CZ62</accession>
<accession>Q5CZ63</accession>
<accession>Q5CZ64</accession>
<reference key="1">
    <citation type="journal article" date="1994" name="FEBS Lett.">
        <title>Cloning and expression of three isoforms of the human EP3 prostanoid receptor.</title>
        <authorList>
            <person name="Adam M."/>
            <person name="Boie Y."/>
            <person name="Rushmore T.H."/>
            <person name="Mueller G."/>
            <person name="Bastien L."/>
            <person name="McKee K.T."/>
            <person name="Metters K.M."/>
            <person name="Abramovitz M."/>
        </authorList>
    </citation>
    <scope>NUCLEOTIDE SEQUENCE [MRNA] (ISOFORMS EP3A; EP3B AND EP3C)</scope>
    <scope>FUNCTION</scope>
    <scope>SUBCELLULAR LOCATION</scope>
</reference>
<reference key="2">
    <citation type="journal article" date="1995" name="Eur. J. Biochem.">
        <title>Splice variants of the human EP3 receptor for prostaglandin E2.</title>
        <authorList>
            <person name="Schmid A."/>
            <person name="Thierauch K.H."/>
            <person name="Schleuning W.-D."/>
            <person name="Dinter H."/>
        </authorList>
    </citation>
    <scope>NUCLEOTIDE SEQUENCE [MRNA] (ISOFORMS EP3A; EP3B; EP3C; EP3D; EP3E AND EP3F)</scope>
    <scope>FUNCTION</scope>
    <scope>SUBCELLULAR LOCATION</scope>
    <source>
        <tissue>Uterus</tissue>
    </source>
</reference>
<reference key="3">
    <citation type="journal article" date="1994" name="Biochem. Biophys. Res. Commun.">
        <title>Cloning and expression of the EP3-subtype of human receptors for prostaglandin E2.</title>
        <authorList>
            <person name="Yang J."/>
            <person name="Xia M."/>
            <person name="Goetzl E.J."/>
            <person name="An S."/>
        </authorList>
    </citation>
    <scope>NUCLEOTIDE SEQUENCE [MRNA] (ISOFORM EP3A)</scope>
    <scope>FUNCTION</scope>
    <scope>SUBCELLULAR LOCATION</scope>
    <scope>TISSUE SPECIFICITY</scope>
    <source>
        <tissue>Kidney</tissue>
    </source>
</reference>
<reference key="4">
    <citation type="journal article" date="1994" name="Biochem. J.">
        <title>Cloning and expression of a prostaglandin E receptor EP3 subtype from human erythroleukaemia cells.</title>
        <authorList>
            <person name="Kunapuli S.P."/>
            <person name="Fen Mao G."/>
            <person name="Bastepe M."/>
            <person name="Liu-Chen L.-Y."/>
            <person name="Li S."/>
            <person name="Cheung P.P."/>
            <person name="DeRiel J.K."/>
            <person name="Ashby B."/>
        </authorList>
    </citation>
    <scope>NUCLEOTIDE SEQUENCE [MRNA] (ISOFORM EP3A)</scope>
    <scope>FUNCTION</scope>
    <scope>TISSUE SPECIFICITY</scope>
</reference>
<reference key="5">
    <citation type="journal article" date="1994" name="Biochemistry">
        <title>Isoforms of the EP3 subtype of human prostaglandin E2 receptor transduce both intracellular calcium and cAMP signals.</title>
        <authorList>
            <person name="An S."/>
            <person name="Yang J."/>
            <person name="So S.W."/>
            <person name="Zeng L."/>
            <person name="Goetzl E.J."/>
        </authorList>
    </citation>
    <scope>NUCLEOTIDE SEQUENCE [MRNA] (ISOFORMS EP3B; EP3C AND EP3D)</scope>
    <scope>FUNCTION</scope>
    <scope>SUBCELLULAR LOCATION</scope>
    <source>
        <tissue>Uterus</tissue>
    </source>
</reference>
<reference key="6">
    <citation type="journal article" date="1995" name="Mol. Pharmacol.">
        <title>Molecular cloning and expression of multiple isoforms of human prostaglandin E receptor EP3 subtype generated by alternative messenger RNA splicing: multiple second messenger systems and tissue-specific distributions.</title>
        <authorList>
            <person name="Kotani M."/>
            <person name="Tanaka I."/>
            <person name="Ogawa Y."/>
            <person name="Usui T."/>
            <person name="Mori K."/>
            <person name="Ichikawa A."/>
            <person name="Narumiya S."/>
            <person name="Yoshimi T."/>
            <person name="Nakao K."/>
        </authorList>
    </citation>
    <scope>NUCLEOTIDE SEQUENCE [MRNA] (ISOFORMS EP3A; EP3B; EP3C AND EP3D)</scope>
    <source>
        <tissue>Kidney</tissue>
    </source>
</reference>
<reference key="7">
    <citation type="journal article" date="1994" name="Br. J. Pharmacol.">
        <title>Molecular cloning and expression of human EP3 receptors: evidence of three variants with differing carboxyl termini.</title>
        <authorList>
            <person name="Regan J.W."/>
            <person name="Bailey T.J."/>
            <person name="Donello J.E."/>
            <person name="Pierce K.L."/>
            <person name="Pepperl D.J."/>
            <person name="Zhang D."/>
            <person name="Kedzie K.M."/>
            <person name="Fairbairn C.E."/>
            <person name="Bogardus A.M."/>
            <person name="Woodward D.F."/>
            <person name="Gil D.W."/>
        </authorList>
    </citation>
    <scope>NUCLEOTIDE SEQUENCE [MRNA] (ISOFORMS EP3A; EP3B; EP3C AND EP3D)</scope>
    <source>
        <tissue>Small intestine</tissue>
    </source>
</reference>
<reference key="8">
    <citation type="journal article" date="1997" name="Genomics">
        <title>Structural organization of the human prostaglandin EP3 receptor subtype gene (PTGER3).</title>
        <authorList>
            <person name="Kotani M."/>
            <person name="Tanaka I."/>
            <person name="Ogawa Y."/>
            <person name="Usui T."/>
            <person name="Tamura N."/>
            <person name="Mori K."/>
            <person name="Narumiya S."/>
            <person name="Yoshimi T."/>
            <person name="Nakao K."/>
        </authorList>
    </citation>
    <scope>NUCLEOTIDE SEQUENCE [GENOMIC DNA / MRNA] (ISOFORMS EP3C; EP3E; EP3-III; EP3-IV; EP3-V AND EP3E2)</scope>
    <scope>ALTERNATIVE SPLICING</scope>
</reference>
<reference key="9">
    <citation type="submission" date="2003-10" db="EMBL/GenBank/DDBJ databases">
        <title>cDNA clones of human proteins involved in signal transduction sequenced by the Guthrie cDNA resource center (www.cdna.org).</title>
        <authorList>
            <person name="Kopatz S.A."/>
            <person name="Aronstam R.S."/>
            <person name="Sharma S.V."/>
        </authorList>
    </citation>
    <scope>NUCLEOTIDE SEQUENCE [LARGE SCALE MRNA] (ISOFORM EP3G)</scope>
    <source>
        <tissue>Placenta</tissue>
    </source>
</reference>
<reference key="10">
    <citation type="journal article" date="2004" name="Nat. Genet.">
        <title>Complete sequencing and characterization of 21,243 full-length human cDNAs.</title>
        <authorList>
            <person name="Ota T."/>
            <person name="Suzuki Y."/>
            <person name="Nishikawa T."/>
            <person name="Otsuki T."/>
            <person name="Sugiyama T."/>
            <person name="Irie R."/>
            <person name="Wakamatsu A."/>
            <person name="Hayashi K."/>
            <person name="Sato H."/>
            <person name="Nagai K."/>
            <person name="Kimura K."/>
            <person name="Makita H."/>
            <person name="Sekine M."/>
            <person name="Obayashi M."/>
            <person name="Nishi T."/>
            <person name="Shibahara T."/>
            <person name="Tanaka T."/>
            <person name="Ishii S."/>
            <person name="Yamamoto J."/>
            <person name="Saito K."/>
            <person name="Kawai Y."/>
            <person name="Isono Y."/>
            <person name="Nakamura Y."/>
            <person name="Nagahari K."/>
            <person name="Murakami K."/>
            <person name="Yasuda T."/>
            <person name="Iwayanagi T."/>
            <person name="Wagatsuma M."/>
            <person name="Shiratori A."/>
            <person name="Sudo H."/>
            <person name="Hosoiri T."/>
            <person name="Kaku Y."/>
            <person name="Kodaira H."/>
            <person name="Kondo H."/>
            <person name="Sugawara M."/>
            <person name="Takahashi M."/>
            <person name="Kanda K."/>
            <person name="Yokoi T."/>
            <person name="Furuya T."/>
            <person name="Kikkawa E."/>
            <person name="Omura Y."/>
            <person name="Abe K."/>
            <person name="Kamihara K."/>
            <person name="Katsuta N."/>
            <person name="Sato K."/>
            <person name="Tanikawa M."/>
            <person name="Yamazaki M."/>
            <person name="Ninomiya K."/>
            <person name="Ishibashi T."/>
            <person name="Yamashita H."/>
            <person name="Murakawa K."/>
            <person name="Fujimori K."/>
            <person name="Tanai H."/>
            <person name="Kimata M."/>
            <person name="Watanabe M."/>
            <person name="Hiraoka S."/>
            <person name="Chiba Y."/>
            <person name="Ishida S."/>
            <person name="Ono Y."/>
            <person name="Takiguchi S."/>
            <person name="Watanabe S."/>
            <person name="Yosida M."/>
            <person name="Hotuta T."/>
            <person name="Kusano J."/>
            <person name="Kanehori K."/>
            <person name="Takahashi-Fujii A."/>
            <person name="Hara H."/>
            <person name="Tanase T.-O."/>
            <person name="Nomura Y."/>
            <person name="Togiya S."/>
            <person name="Komai F."/>
            <person name="Hara R."/>
            <person name="Takeuchi K."/>
            <person name="Arita M."/>
            <person name="Imose N."/>
            <person name="Musashino K."/>
            <person name="Yuuki H."/>
            <person name="Oshima A."/>
            <person name="Sasaki N."/>
            <person name="Aotsuka S."/>
            <person name="Yoshikawa Y."/>
            <person name="Matsunawa H."/>
            <person name="Ichihara T."/>
            <person name="Shiohata N."/>
            <person name="Sano S."/>
            <person name="Moriya S."/>
            <person name="Momiyama H."/>
            <person name="Satoh N."/>
            <person name="Takami S."/>
            <person name="Terashima Y."/>
            <person name="Suzuki O."/>
            <person name="Nakagawa S."/>
            <person name="Senoh A."/>
            <person name="Mizoguchi H."/>
            <person name="Goto Y."/>
            <person name="Shimizu F."/>
            <person name="Wakebe H."/>
            <person name="Hishigaki H."/>
            <person name="Watanabe T."/>
            <person name="Sugiyama A."/>
            <person name="Takemoto M."/>
            <person name="Kawakami B."/>
            <person name="Yamazaki M."/>
            <person name="Watanabe K."/>
            <person name="Kumagai A."/>
            <person name="Itakura S."/>
            <person name="Fukuzumi Y."/>
            <person name="Fujimori Y."/>
            <person name="Komiyama M."/>
            <person name="Tashiro H."/>
            <person name="Tanigami A."/>
            <person name="Fujiwara T."/>
            <person name="Ono T."/>
            <person name="Yamada K."/>
            <person name="Fujii Y."/>
            <person name="Ozaki K."/>
            <person name="Hirao M."/>
            <person name="Ohmori Y."/>
            <person name="Kawabata A."/>
            <person name="Hikiji T."/>
            <person name="Kobatake N."/>
            <person name="Inagaki H."/>
            <person name="Ikema Y."/>
            <person name="Okamoto S."/>
            <person name="Okitani R."/>
            <person name="Kawakami T."/>
            <person name="Noguchi S."/>
            <person name="Itoh T."/>
            <person name="Shigeta K."/>
            <person name="Senba T."/>
            <person name="Matsumura K."/>
            <person name="Nakajima Y."/>
            <person name="Mizuno T."/>
            <person name="Morinaga M."/>
            <person name="Sasaki M."/>
            <person name="Togashi T."/>
            <person name="Oyama M."/>
            <person name="Hata H."/>
            <person name="Watanabe M."/>
            <person name="Komatsu T."/>
            <person name="Mizushima-Sugano J."/>
            <person name="Satoh T."/>
            <person name="Shirai Y."/>
            <person name="Takahashi Y."/>
            <person name="Nakagawa K."/>
            <person name="Okumura K."/>
            <person name="Nagase T."/>
            <person name="Nomura N."/>
            <person name="Kikuchi H."/>
            <person name="Masuho Y."/>
            <person name="Yamashita R."/>
            <person name="Nakai K."/>
            <person name="Yada T."/>
            <person name="Nakamura Y."/>
            <person name="Ohara O."/>
            <person name="Isogai T."/>
            <person name="Sugano S."/>
        </authorList>
    </citation>
    <scope>NUCLEOTIDE SEQUENCE [LARGE SCALE MRNA] (ISOFORM EP3A)</scope>
</reference>
<reference key="11">
    <citation type="journal article" date="2008" name="Nat. Methods">
        <title>Human protein factory for converting the transcriptome into an in vitro-expressed proteome.</title>
        <authorList>
            <person name="Goshima N."/>
            <person name="Kawamura Y."/>
            <person name="Fukumoto A."/>
            <person name="Miura A."/>
            <person name="Honma R."/>
            <person name="Satoh R."/>
            <person name="Wakamatsu A."/>
            <person name="Yamamoto J."/>
            <person name="Kimura K."/>
            <person name="Nishikawa T."/>
            <person name="Andoh T."/>
            <person name="Iida Y."/>
            <person name="Ishikawa K."/>
            <person name="Ito E."/>
            <person name="Kagawa N."/>
            <person name="Kaminaga C."/>
            <person name="Kanehori K."/>
            <person name="Kawakami B."/>
            <person name="Kenmochi K."/>
            <person name="Kimura R."/>
            <person name="Kobayashi M."/>
            <person name="Kuroita T."/>
            <person name="Kuwayama H."/>
            <person name="Maruyama Y."/>
            <person name="Matsuo K."/>
            <person name="Minami K."/>
            <person name="Mitsubori M."/>
            <person name="Mori M."/>
            <person name="Morishita R."/>
            <person name="Murase A."/>
            <person name="Nishikawa A."/>
            <person name="Nishikawa S."/>
            <person name="Okamoto T."/>
            <person name="Sakagami N."/>
            <person name="Sakamoto Y."/>
            <person name="Sasaki Y."/>
            <person name="Seki T."/>
            <person name="Sono S."/>
            <person name="Sugiyama A."/>
            <person name="Sumiya T."/>
            <person name="Takayama T."/>
            <person name="Takayama Y."/>
            <person name="Takeda H."/>
            <person name="Togashi T."/>
            <person name="Yahata K."/>
            <person name="Yamada H."/>
            <person name="Yanagisawa Y."/>
            <person name="Endo Y."/>
            <person name="Imamoto F."/>
            <person name="Kisu Y."/>
            <person name="Tanaka S."/>
            <person name="Isogai T."/>
            <person name="Imai J."/>
            <person name="Watanabe S."/>
            <person name="Nomura N."/>
        </authorList>
    </citation>
    <scope>NUCLEOTIDE SEQUENCE [LARGE SCALE MRNA] (ISOFORM EP3B)</scope>
</reference>
<reference key="12">
    <citation type="journal article" date="2006" name="Nature">
        <title>The DNA sequence and biological annotation of human chromosome 1.</title>
        <authorList>
            <person name="Gregory S.G."/>
            <person name="Barlow K.F."/>
            <person name="McLay K.E."/>
            <person name="Kaul R."/>
            <person name="Swarbreck D."/>
            <person name="Dunham A."/>
            <person name="Scott C.E."/>
            <person name="Howe K.L."/>
            <person name="Woodfine K."/>
            <person name="Spencer C.C.A."/>
            <person name="Jones M.C."/>
            <person name="Gillson C."/>
            <person name="Searle S."/>
            <person name="Zhou Y."/>
            <person name="Kokocinski F."/>
            <person name="McDonald L."/>
            <person name="Evans R."/>
            <person name="Phillips K."/>
            <person name="Atkinson A."/>
            <person name="Cooper R."/>
            <person name="Jones C."/>
            <person name="Hall R.E."/>
            <person name="Andrews T.D."/>
            <person name="Lloyd C."/>
            <person name="Ainscough R."/>
            <person name="Almeida J.P."/>
            <person name="Ambrose K.D."/>
            <person name="Anderson F."/>
            <person name="Andrew R.W."/>
            <person name="Ashwell R.I.S."/>
            <person name="Aubin K."/>
            <person name="Babbage A.K."/>
            <person name="Bagguley C.L."/>
            <person name="Bailey J."/>
            <person name="Beasley H."/>
            <person name="Bethel G."/>
            <person name="Bird C.P."/>
            <person name="Bray-Allen S."/>
            <person name="Brown J.Y."/>
            <person name="Brown A.J."/>
            <person name="Buckley D."/>
            <person name="Burton J."/>
            <person name="Bye J."/>
            <person name="Carder C."/>
            <person name="Chapman J.C."/>
            <person name="Clark S.Y."/>
            <person name="Clarke G."/>
            <person name="Clee C."/>
            <person name="Cobley V."/>
            <person name="Collier R.E."/>
            <person name="Corby N."/>
            <person name="Coville G.J."/>
            <person name="Davies J."/>
            <person name="Deadman R."/>
            <person name="Dunn M."/>
            <person name="Earthrowl M."/>
            <person name="Ellington A.G."/>
            <person name="Errington H."/>
            <person name="Frankish A."/>
            <person name="Frankland J."/>
            <person name="French L."/>
            <person name="Garner P."/>
            <person name="Garnett J."/>
            <person name="Gay L."/>
            <person name="Ghori M.R.J."/>
            <person name="Gibson R."/>
            <person name="Gilby L.M."/>
            <person name="Gillett W."/>
            <person name="Glithero R.J."/>
            <person name="Grafham D.V."/>
            <person name="Griffiths C."/>
            <person name="Griffiths-Jones S."/>
            <person name="Grocock R."/>
            <person name="Hammond S."/>
            <person name="Harrison E.S.I."/>
            <person name="Hart E."/>
            <person name="Haugen E."/>
            <person name="Heath P.D."/>
            <person name="Holmes S."/>
            <person name="Holt K."/>
            <person name="Howden P.J."/>
            <person name="Hunt A.R."/>
            <person name="Hunt S.E."/>
            <person name="Hunter G."/>
            <person name="Isherwood J."/>
            <person name="James R."/>
            <person name="Johnson C."/>
            <person name="Johnson D."/>
            <person name="Joy A."/>
            <person name="Kay M."/>
            <person name="Kershaw J.K."/>
            <person name="Kibukawa M."/>
            <person name="Kimberley A.M."/>
            <person name="King A."/>
            <person name="Knights A.J."/>
            <person name="Lad H."/>
            <person name="Laird G."/>
            <person name="Lawlor S."/>
            <person name="Leongamornlert D.A."/>
            <person name="Lloyd D.M."/>
            <person name="Loveland J."/>
            <person name="Lovell J."/>
            <person name="Lush M.J."/>
            <person name="Lyne R."/>
            <person name="Martin S."/>
            <person name="Mashreghi-Mohammadi M."/>
            <person name="Matthews L."/>
            <person name="Matthews N.S.W."/>
            <person name="McLaren S."/>
            <person name="Milne S."/>
            <person name="Mistry S."/>
            <person name="Moore M.J.F."/>
            <person name="Nickerson T."/>
            <person name="O'Dell C.N."/>
            <person name="Oliver K."/>
            <person name="Palmeiri A."/>
            <person name="Palmer S.A."/>
            <person name="Parker A."/>
            <person name="Patel D."/>
            <person name="Pearce A.V."/>
            <person name="Peck A.I."/>
            <person name="Pelan S."/>
            <person name="Phelps K."/>
            <person name="Phillimore B.J."/>
            <person name="Plumb R."/>
            <person name="Rajan J."/>
            <person name="Raymond C."/>
            <person name="Rouse G."/>
            <person name="Saenphimmachak C."/>
            <person name="Sehra H.K."/>
            <person name="Sheridan E."/>
            <person name="Shownkeen R."/>
            <person name="Sims S."/>
            <person name="Skuce C.D."/>
            <person name="Smith M."/>
            <person name="Steward C."/>
            <person name="Subramanian S."/>
            <person name="Sycamore N."/>
            <person name="Tracey A."/>
            <person name="Tromans A."/>
            <person name="Van Helmond Z."/>
            <person name="Wall M."/>
            <person name="Wallis J.M."/>
            <person name="White S."/>
            <person name="Whitehead S.L."/>
            <person name="Wilkinson J.E."/>
            <person name="Willey D.L."/>
            <person name="Williams H."/>
            <person name="Wilming L."/>
            <person name="Wray P.W."/>
            <person name="Wu Z."/>
            <person name="Coulson A."/>
            <person name="Vaudin M."/>
            <person name="Sulston J.E."/>
            <person name="Durbin R.M."/>
            <person name="Hubbard T."/>
            <person name="Wooster R."/>
            <person name="Dunham I."/>
            <person name="Carter N.P."/>
            <person name="McVean G."/>
            <person name="Ross M.T."/>
            <person name="Harrow J."/>
            <person name="Olson M.V."/>
            <person name="Beck S."/>
            <person name="Rogers J."/>
            <person name="Bentley D.R."/>
        </authorList>
    </citation>
    <scope>NUCLEOTIDE SEQUENCE [LARGE SCALE GENOMIC DNA]</scope>
</reference>
<reference key="13">
    <citation type="submission" date="2005-09" db="EMBL/GenBank/DDBJ databases">
        <authorList>
            <person name="Mural R.J."/>
            <person name="Istrail S."/>
            <person name="Sutton G.G."/>
            <person name="Florea L."/>
            <person name="Halpern A.L."/>
            <person name="Mobarry C.M."/>
            <person name="Lippert R."/>
            <person name="Walenz B."/>
            <person name="Shatkay H."/>
            <person name="Dew I."/>
            <person name="Miller J.R."/>
            <person name="Flanigan M.J."/>
            <person name="Edwards N.J."/>
            <person name="Bolanos R."/>
            <person name="Fasulo D."/>
            <person name="Halldorsson B.V."/>
            <person name="Hannenhalli S."/>
            <person name="Turner R."/>
            <person name="Yooseph S."/>
            <person name="Lu F."/>
            <person name="Nusskern D.R."/>
            <person name="Shue B.C."/>
            <person name="Zheng X.H."/>
            <person name="Zhong F."/>
            <person name="Delcher A.L."/>
            <person name="Huson D.H."/>
            <person name="Kravitz S.A."/>
            <person name="Mouchard L."/>
            <person name="Reinert K."/>
            <person name="Remington K.A."/>
            <person name="Clark A.G."/>
            <person name="Waterman M.S."/>
            <person name="Eichler E.E."/>
            <person name="Adams M.D."/>
            <person name="Hunkapiller M.W."/>
            <person name="Myers E.W."/>
            <person name="Venter J.C."/>
        </authorList>
    </citation>
    <scope>NUCLEOTIDE SEQUENCE [LARGE SCALE GENOMIC DNA]</scope>
</reference>
<reference key="14">
    <citation type="journal article" date="2004" name="Genome Res.">
        <title>The status, quality, and expansion of the NIH full-length cDNA project: the Mammalian Gene Collection (MGC).</title>
        <authorList>
            <consortium name="The MGC Project Team"/>
        </authorList>
    </citation>
    <scope>NUCLEOTIDE SEQUENCE [LARGE SCALE MRNA] (ISOFORMS EP3D AND 12)</scope>
    <source>
        <tissue>Lung</tissue>
    </source>
</reference>
<reference key="15">
    <citation type="journal article" date="2007" name="Prostaglandins Leukot. Essent. Fatty Acids">
        <title>A new mRNA splice variant coding for the human EP3-I receptor isoform.</title>
        <authorList>
            <person name="Kotelevets L."/>
            <person name="Foudi N."/>
            <person name="Louedec L."/>
            <person name="Couvelard A."/>
            <person name="Chastre E."/>
            <person name="Norel X."/>
        </authorList>
    </citation>
    <scope>TISSUE SPECIFICITY</scope>
</reference>
<name>PE2R3_HUMAN</name>
<evidence type="ECO:0000250" key="1">
    <source>
        <dbReference type="UniProtKB" id="P30557"/>
    </source>
</evidence>
<evidence type="ECO:0000250" key="2">
    <source>
        <dbReference type="UniProtKB" id="P34980"/>
    </source>
</evidence>
<evidence type="ECO:0000255" key="3"/>
<evidence type="ECO:0000255" key="4">
    <source>
        <dbReference type="PROSITE-ProRule" id="PRU00521"/>
    </source>
</evidence>
<evidence type="ECO:0000269" key="5">
    <source>
    </source>
</evidence>
<evidence type="ECO:0000269" key="6">
    <source>
    </source>
</evidence>
<evidence type="ECO:0000269" key="7">
    <source>
    </source>
</evidence>
<evidence type="ECO:0000269" key="8">
    <source>
    </source>
</evidence>
<evidence type="ECO:0000269" key="9">
    <source>
    </source>
</evidence>
<evidence type="ECO:0000269" key="10">
    <source>
    </source>
</evidence>
<evidence type="ECO:0000303" key="11">
    <source>
    </source>
</evidence>
<evidence type="ECO:0000303" key="12">
    <source>
    </source>
</evidence>
<evidence type="ECO:0000303" key="13">
    <source>
    </source>
</evidence>
<evidence type="ECO:0000303" key="14">
    <source>
    </source>
</evidence>
<evidence type="ECO:0000303" key="15">
    <source>
    </source>
</evidence>
<evidence type="ECO:0000303" key="16">
    <source>
    </source>
</evidence>
<evidence type="ECO:0000303" key="17">
    <source>
    </source>
</evidence>
<evidence type="ECO:0000303" key="18">
    <source>
    </source>
</evidence>
<evidence type="ECO:0000303" key="19">
    <source ref="9"/>
</evidence>
<evidence type="ECO:0000305" key="20"/>
<evidence type="ECO:0007829" key="21">
    <source>
        <dbReference type="PDB" id="6M9T"/>
    </source>
</evidence>
<keyword id="KW-0002">3D-structure</keyword>
<keyword id="KW-0025">Alternative splicing</keyword>
<keyword id="KW-1003">Cell membrane</keyword>
<keyword id="KW-0297">G-protein coupled receptor</keyword>
<keyword id="KW-0325">Glycoprotein</keyword>
<keyword id="KW-0449">Lipoprotein</keyword>
<keyword id="KW-0472">Membrane</keyword>
<keyword id="KW-0564">Palmitate</keyword>
<keyword id="KW-1267">Proteomics identification</keyword>
<keyword id="KW-0675">Receptor</keyword>
<keyword id="KW-1185">Reference proteome</keyword>
<keyword id="KW-0807">Transducer</keyword>
<keyword id="KW-0812">Transmembrane</keyword>
<keyword id="KW-1133">Transmembrane helix</keyword>
<sequence>MKETRGYGGDAPFCTRLNHSYTGMWAPERSAEARGNLTRPPGSGEDCGSVSVAFPITMLLTGFVGNALAMLLVSRSYRRRESKRKKSFLLCIGWLALTDLVGQLLTTPVVIVVYLSKQRWEHIDPSGRLCTFFGLTMTVFGLSSLFIASAMAVERALAIRAPHWYASHMKTRATRAVLLGVWLAVLAFALLPVLGVGQYTVQWPGTWCFISTGRGGNGTSSSHNWGNLFFASAFAFLGLLALTVTFSCNLATIKALVSRCRAKATASQSSAQWGRITTETAIQLMGIMCVLSVCWSPLLIMMLKMIFNQTSVEHCKTHTEKQKECNFFLIAVRLASLNQILDPWVYLLLRKILLRKFCQIRYHTNNYASSSTSLPCQCSSTLMWSDHLER</sequence>
<organism>
    <name type="scientific">Homo sapiens</name>
    <name type="common">Human</name>
    <dbReference type="NCBI Taxonomy" id="9606"/>
    <lineage>
        <taxon>Eukaryota</taxon>
        <taxon>Metazoa</taxon>
        <taxon>Chordata</taxon>
        <taxon>Craniata</taxon>
        <taxon>Vertebrata</taxon>
        <taxon>Euteleostomi</taxon>
        <taxon>Mammalia</taxon>
        <taxon>Eutheria</taxon>
        <taxon>Euarchontoglires</taxon>
        <taxon>Primates</taxon>
        <taxon>Haplorrhini</taxon>
        <taxon>Catarrhini</taxon>
        <taxon>Hominidae</taxon>
        <taxon>Homo</taxon>
    </lineage>
</organism>
<protein>
    <recommendedName>
        <fullName>Prostaglandin E2 receptor EP3 subtype</fullName>
        <shortName>PGE receptor EP3 subtype</shortName>
        <shortName>PGE2 receptor EP3 subtype</shortName>
    </recommendedName>
    <alternativeName>
        <fullName>PGE2-R</fullName>
    </alternativeName>
    <alternativeName>
        <fullName>Prostanoid EP3 receptor</fullName>
    </alternativeName>
</protein>
<gene>
    <name type="primary">PTGER3</name>
</gene>
<proteinExistence type="evidence at protein level"/>